<evidence type="ECO:0000255" key="1">
    <source>
        <dbReference type="PROSITE-ProRule" id="PRU00135"/>
    </source>
</evidence>
<evidence type="ECO:0000255" key="2">
    <source>
        <dbReference type="PROSITE-ProRule" id="PRU00168"/>
    </source>
</evidence>
<evidence type="ECO:0000255" key="3">
    <source>
        <dbReference type="PROSITE-ProRule" id="PRU00192"/>
    </source>
</evidence>
<evidence type="ECO:0000256" key="4">
    <source>
        <dbReference type="SAM" id="MobiDB-lite"/>
    </source>
</evidence>
<evidence type="ECO:0000269" key="5">
    <source>
    </source>
</evidence>
<evidence type="ECO:0000269" key="6">
    <source>
    </source>
</evidence>
<evidence type="ECO:0000269" key="7">
    <source>
    </source>
</evidence>
<keyword id="KW-0131">Cell cycle</keyword>
<keyword id="KW-0132">Cell division</keyword>
<keyword id="KW-0344">Guanine-nucleotide releasing factor</keyword>
<keyword id="KW-0728">SH3 domain</keyword>
<dbReference type="EMBL" id="M26647">
    <property type="protein sequence ID" value="AAA16565.1"/>
    <property type="molecule type" value="Genomic_DNA"/>
</dbReference>
<dbReference type="PIR" id="S14177">
    <property type="entry name" value="S14177"/>
</dbReference>
<dbReference type="SMR" id="P0CF32"/>
<dbReference type="IntAct" id="P0CF32">
    <property type="interactions" value="4"/>
</dbReference>
<dbReference type="MINT" id="P0CF32"/>
<dbReference type="VEuPathDB" id="FungiDB:YLR310C"/>
<dbReference type="GO" id="GO:0005886">
    <property type="term" value="C:plasma membrane"/>
    <property type="evidence" value="ECO:0007669"/>
    <property type="project" value="TreeGrafter"/>
</dbReference>
<dbReference type="GO" id="GO:0005085">
    <property type="term" value="F:guanyl-nucleotide exchange factor activity"/>
    <property type="evidence" value="ECO:0007669"/>
    <property type="project" value="UniProtKB-KW"/>
</dbReference>
<dbReference type="GO" id="GO:0051301">
    <property type="term" value="P:cell division"/>
    <property type="evidence" value="ECO:0007669"/>
    <property type="project" value="UniProtKB-KW"/>
</dbReference>
<dbReference type="GO" id="GO:0007265">
    <property type="term" value="P:Ras protein signal transduction"/>
    <property type="evidence" value="ECO:0007669"/>
    <property type="project" value="TreeGrafter"/>
</dbReference>
<dbReference type="CDD" id="cd00155">
    <property type="entry name" value="RasGEF"/>
    <property type="match status" value="1"/>
</dbReference>
<dbReference type="CDD" id="cd06224">
    <property type="entry name" value="REM"/>
    <property type="match status" value="1"/>
</dbReference>
<dbReference type="CDD" id="cd11883">
    <property type="entry name" value="SH3_Sdc25"/>
    <property type="match status" value="1"/>
</dbReference>
<dbReference type="Gene3D" id="1.10.840.10">
    <property type="entry name" value="Ras guanine-nucleotide exchange factors catalytic domain"/>
    <property type="match status" value="1"/>
</dbReference>
<dbReference type="Gene3D" id="2.30.30.40">
    <property type="entry name" value="SH3 Domains"/>
    <property type="match status" value="1"/>
</dbReference>
<dbReference type="Gene3D" id="1.20.870.10">
    <property type="entry name" value="Son of sevenless (SoS) protein Chain: S domain 1"/>
    <property type="match status" value="1"/>
</dbReference>
<dbReference type="InterPro" id="IPR008937">
    <property type="entry name" value="Ras-like_GEF"/>
</dbReference>
<dbReference type="InterPro" id="IPR000651">
    <property type="entry name" value="Ras-like_Gua-exchang_fac_N"/>
</dbReference>
<dbReference type="InterPro" id="IPR019804">
    <property type="entry name" value="Ras_G-nucl-exch_fac_CS"/>
</dbReference>
<dbReference type="InterPro" id="IPR023578">
    <property type="entry name" value="Ras_GEF_dom_sf"/>
</dbReference>
<dbReference type="InterPro" id="IPR001895">
    <property type="entry name" value="RASGEF_cat_dom"/>
</dbReference>
<dbReference type="InterPro" id="IPR036964">
    <property type="entry name" value="RASGEF_cat_dom_sf"/>
</dbReference>
<dbReference type="InterPro" id="IPR036028">
    <property type="entry name" value="SH3-like_dom_sf"/>
</dbReference>
<dbReference type="InterPro" id="IPR001452">
    <property type="entry name" value="SH3_domain"/>
</dbReference>
<dbReference type="PANTHER" id="PTHR23113:SF368">
    <property type="entry name" value="CELL DIVISION CONTROL PROTEIN 25"/>
    <property type="match status" value="1"/>
</dbReference>
<dbReference type="PANTHER" id="PTHR23113">
    <property type="entry name" value="GUANINE NUCLEOTIDE EXCHANGE FACTOR"/>
    <property type="match status" value="1"/>
</dbReference>
<dbReference type="Pfam" id="PF00617">
    <property type="entry name" value="RasGEF"/>
    <property type="match status" value="1"/>
</dbReference>
<dbReference type="Pfam" id="PF00618">
    <property type="entry name" value="RasGEF_N"/>
    <property type="match status" value="1"/>
</dbReference>
<dbReference type="SMART" id="SM00147">
    <property type="entry name" value="RasGEF"/>
    <property type="match status" value="1"/>
</dbReference>
<dbReference type="SMART" id="SM00229">
    <property type="entry name" value="RasGEFN"/>
    <property type="match status" value="1"/>
</dbReference>
<dbReference type="SMART" id="SM00326">
    <property type="entry name" value="SH3"/>
    <property type="match status" value="1"/>
</dbReference>
<dbReference type="SUPFAM" id="SSF48366">
    <property type="entry name" value="Ras GEF"/>
    <property type="match status" value="1"/>
</dbReference>
<dbReference type="SUPFAM" id="SSF50044">
    <property type="entry name" value="SH3-domain"/>
    <property type="match status" value="1"/>
</dbReference>
<dbReference type="PROSITE" id="PS00720">
    <property type="entry name" value="RASGEF"/>
    <property type="match status" value="1"/>
</dbReference>
<dbReference type="PROSITE" id="PS50009">
    <property type="entry name" value="RASGEF_CAT"/>
    <property type="match status" value="1"/>
</dbReference>
<dbReference type="PROSITE" id="PS50212">
    <property type="entry name" value="RASGEF_NTER"/>
    <property type="match status" value="1"/>
</dbReference>
<dbReference type="PROSITE" id="PS50002">
    <property type="entry name" value="SH3"/>
    <property type="match status" value="1"/>
</dbReference>
<feature type="chain" id="PRO_0000068893" description="Guanine nucleotide exchange factor SDC25">
    <location>
        <begin position="1"/>
        <end position="1253"/>
    </location>
</feature>
<feature type="domain" description="SH3" evidence="3">
    <location>
        <begin position="26"/>
        <end position="98"/>
    </location>
</feature>
<feature type="domain" description="N-terminal Ras-GEF" evidence="1">
    <location>
        <begin position="782"/>
        <end position="914"/>
    </location>
</feature>
<feature type="domain" description="Ras-GEF" evidence="2">
    <location>
        <begin position="952"/>
        <end position="1199"/>
    </location>
</feature>
<feature type="region of interest" description="Disordered" evidence="4">
    <location>
        <begin position="624"/>
        <end position="649"/>
    </location>
</feature>
<feature type="region of interest" description="Disordered" evidence="4">
    <location>
        <begin position="1202"/>
        <end position="1253"/>
    </location>
</feature>
<feature type="compositionally biased region" description="Basic and acidic residues" evidence="4">
    <location>
        <begin position="1215"/>
        <end position="1237"/>
    </location>
</feature>
<feature type="compositionally biased region" description="Basic residues" evidence="4">
    <location>
        <begin position="1240"/>
        <end position="1253"/>
    </location>
</feature>
<feature type="sequence variant" description="In strain: 0L136.">
    <original>KSCDDYFDVLK</original>
    <variation>NPVMTILMCLN</variation>
    <location>
        <begin position="682"/>
        <end position="692"/>
    </location>
</feature>
<feature type="sequence variant" description="In strain: 0L136.">
    <location>
        <position position="740"/>
    </location>
</feature>
<feature type="sequence variant" description="In strain: 0L136.">
    <original>PIV</original>
    <variation>SNN</variation>
    <location>
        <begin position="783"/>
        <end position="785"/>
    </location>
</feature>
<feature type="sequence variant" description="In strain: 0L136.">
    <original>I</original>
    <variation>T</variation>
    <location>
        <position position="974"/>
    </location>
</feature>
<feature type="sequence variant" description="In strain: 0L136.">
    <original>A</original>
    <variation>D</variation>
    <location>
        <position position="1048"/>
    </location>
</feature>
<protein>
    <recommendedName>
        <fullName>Guanine nucleotide exchange factor SDC25</fullName>
    </recommendedName>
</protein>
<organism>
    <name type="scientific">Saccharomyces cerevisiae</name>
    <name type="common">Baker's yeast</name>
    <dbReference type="NCBI Taxonomy" id="4932"/>
    <lineage>
        <taxon>Eukaryota</taxon>
        <taxon>Fungi</taxon>
        <taxon>Dikarya</taxon>
        <taxon>Ascomycota</taxon>
        <taxon>Saccharomycotina</taxon>
        <taxon>Saccharomycetes</taxon>
        <taxon>Saccharomycetales</taxon>
        <taxon>Saccharomycetaceae</taxon>
        <taxon>Saccharomyces</taxon>
    </lineage>
</organism>
<comment type="function">
    <text evidence="5 6 7">Promotes the exchange of Ras-bound GDP by GTP.</text>
</comment>
<comment type="miscellaneous">
    <text>Suppresses the CDC25-5 mutation in yeast (restores cAMP level) and has similar functions as CDC25.</text>
</comment>
<sequence length="1253" mass="144980">MSCTASYAGMTTPVKDKEGHGIPCLQPIDVVECTYQYFTKSRNKLSLRVGDLIYVLTKGSNGWWDGVLIRHSANNNNNNSLILDRGWFPPSFTRSILNELHGVPDIGNELEIFQAGLNLKLELSSNPVILSLEDFLDCCRDIEFKEQLAWSPTPVHERKGCCELLYYNQDLDVYCRTLPYLPQNQVETVNDYSSFPAISKIAGKKMPITSSPDLFYLNDCDVVYWYDLTRLVCHYVNLTERDLLANEREKFLTSLDLLTAQITYVYMLFRNLRLVEDSFKKTLKKLIYTLSRFSINANIWFHSTSFEEREAIASQKDPERRSPLLQSILGTFQKFHFLLRLLHFLSNPNELTILPQLTPRFFKDSFNTISWNNPFLRTVFNQHMSMTLPRQMIKAVAGASGIVAENIDEIPASKQGTFISSETSHHSPSAPFQRRRRGTIFSNVSGSSDESDTIWSKRKKPYPLNEETLSLVRARKKQLDGKLKQMIKSANEYLSNTANFSKMLNFEMNFKTYEEVSGTIPIIDILENLDLTIFLNLRELGDENRVFDEDVAIGDEDKEFLKHSLSSLSYILSDYFNMKQYFHDVVVKFIIVAQHLTLEDPFVFSPMQNDLPTGYYEPMKPSSLNLDNAKDKKNGSQNTDIQEEEDEYEPDPDSLILFHNLINQDSDFNDLKFFNLAHVFKKSCDDYFDVLKLAIEFVNQLILERENLLNYAARMMKNNITELLLRGEEGYGSYDGGETAEKSDTNAVYADSDTKDNDEWRDSQVKLPRYLQREYDSELIWGPIVRIKGGSKHALISYLTDNEKKDLFFNITFLITFRSIFTTTEFLSYLISQYNLDPPEDLCFEEYNEWVTKKLIPVKCRVVEIMTTFFKQYWFPGYDEPDLATLNLDYFAQVAIKENITGSVELLKEVNQKFKLGNIQEATAPMKTLDQQICQDHYSGTLYSTTESILAVDPVLFATQLTILEHEIYCEITIFDCLQKIWKNKYTKSYGASPGLNEFISFANKLTNFISYSVVKEADKSKRAKLLSHFIFIAEYCRKFNNFSSMTAIISALYSSPIYRLEKTWQAVIPQTRDLLQSLNKLMDPKKNFINYRNELKSLHSAPCVPFFGVYLSDLTFTDSGNPDYLVLEHGLKGVHDEKKYINFNKRSRLVDILQEIIYFKKTHYDFTKDRTVIECISNSLENIPHIEKQYQLSLIIEPKPRKKVVPNSNSNNKSQEKSRDDQTDEGKTSTKKDRFPKFQLHKTKKKAPKVSK</sequence>
<name>SDC25_YEASX</name>
<reference key="1">
    <citation type="journal article" date="1991" name="Mol. Cell. Biol.">
        <title>SDC25, a CDC25-like gene which contains a RAS-activating domain and is a dispensable gene of Saccharomyces cerevisiae.</title>
        <authorList>
            <person name="Damak F."/>
            <person name="Boy-Marcotte E."/>
            <person name="le Roscouet D."/>
            <person name="Guilbaud R."/>
            <person name="Jacquet M."/>
        </authorList>
    </citation>
    <scope>NUCLEOTIDE SEQUENCE [GENOMIC DNA]</scope>
    <source>
        <strain>ATCC 200060 / W303</strain>
    </source>
</reference>
<reference key="2">
    <citation type="journal article" date="1989" name="Gene">
        <title>The C-terminal part of a gene partially homologous to CDC 25 gene suppresses the cdc25-5 mutation in Saccharomyces cerevisiae.</title>
        <authorList>
            <person name="Boy-Marcotte E."/>
            <person name="Damak F."/>
            <person name="Camonis J."/>
            <person name="Garreau H."/>
            <person name="Jacquet M."/>
        </authorList>
    </citation>
    <scope>NUCLEOTIDE SEQUENCE [GENOMIC DNA] OF 670-1253</scope>
    <source>
        <strain>0L136</strain>
    </source>
</reference>
<reference key="3">
    <citation type="journal article" date="1990" name="Science">
        <title>Enhancement of the GDP-GTP exchange of RAS proteins by the carboxyl-terminal domain of SCD25.</title>
        <authorList>
            <person name="Crechet J.B."/>
            <person name="Poullet P."/>
            <person name="Mistou M.-Y."/>
            <person name="Parmeggiani A."/>
            <person name="Camonis J."/>
            <person name="Boy-Marcotte E."/>
            <person name="Damak F."/>
            <person name="Jacquet M."/>
        </authorList>
    </citation>
    <scope>FUNCTION</scope>
</reference>
<reference key="4">
    <citation type="journal article" date="1991" name="Oncogene">
        <title>The COOH-domain of the product of the Saccharomyces cerevisiae SCD25 gene elicits activation of p21-ras proteins in mammalian cells.</title>
        <authorList>
            <person name="Rey I."/>
            <person name="Schweighoffer F."/>
            <person name="Barlat I."/>
            <person name="Camonis J."/>
            <person name="Boy-Marcotte E."/>
            <person name="Guilbaud R."/>
            <person name="Jacquet M."/>
            <person name="Tocque B."/>
        </authorList>
    </citation>
    <scope>FUNCTION</scope>
</reference>
<reference key="5">
    <citation type="journal article" date="1996" name="Mol. Biol. Cell">
        <title>SDC25, a dispensable Ras guanine nucleotide exchange factor of Saccharomyces cerevisiae differs from CDC25 by its regulation.</title>
        <authorList>
            <person name="Boy-Marcotte E."/>
            <person name="Ikonomi P."/>
            <person name="Jacquet M."/>
        </authorList>
    </citation>
    <scope>FUNCTION</scope>
</reference>
<gene>
    <name type="primary">SDC25</name>
    <name type="synonym">SCD25</name>
</gene>
<accession>P0CF32</accession>
<accession>P14771</accession>
<accession>Q12037</accession>
<accession>Q12065</accession>
<accession>Q6B0T5</accession>
<accession>Q6WV04</accession>
<proteinExistence type="predicted"/>